<sequence length="512" mass="56157">MATTNGAVENGQPDGKPPALPRPIRNLEVKFTKIFINNDWHESKSGRKFATYNPSTLEKICEVEEGDKPDVDKAVEAAQAAFQRGSPWRRLDALSRGQLLHQLADLVERDRAILATLETMDTGKPFLHAFFVDLEGCIKTFRYFAGWADKIQGRTIPTDDNVVCFTRHEPIGVCGAITPWNFPLLMLAWKLAPALCCGNTVVLKPAEQTPLTALYLASLIKEVGFPPGVVNIVPGFGPTVGAAISSHPQINKIAFTGSTEVGKLVREAASRSNLKRVTLELGGKNPCIVCADADLDLAVECAHQGVFFNQGQCCTAASRVFVEEQVYGEFVRRSVEFAKKRPVGDPFDAKTEQGPQIDQKQFDKILELIESGKKEGAKLECGGSAMEDRGLFIKPTVFSDVTDNMRIAKEEIFGPVQPILKFKNLEEVIKRANSTDYGLTAAVFTKNLDKALKLAAALESGTVWINCYNAFYAQAPFGGFKMSGNGRELGEYALAEYTEVKTVTIKLEEKNP</sequence>
<reference key="1">
    <citation type="journal article" date="2000" name="Mech. Dev.">
        <title>A retinoic acid synthesizing enzyme in ventral retina and telencephalon of the embryonic mouse.</title>
        <authorList>
            <person name="Li H."/>
            <person name="Wagner E."/>
            <person name="McCaffery P."/>
            <person name="Smith D."/>
            <person name="Andreadis A."/>
            <person name="Drager U.C."/>
        </authorList>
    </citation>
    <scope>NUCLEOTIDE SEQUENCE [MRNA]</scope>
    <scope>TISSUE SPECIFICITY</scope>
    <source>
        <strain>B6/D2</strain>
    </source>
</reference>
<reference key="2">
    <citation type="journal article" date="2000" name="Mech. Dev.">
        <title>RALDH3, a retinaldehyde dehydrogenase that generates retinoic acid, is expressed in the ventral retina, otic vesicle and olfactory pit during mouse development.</title>
        <authorList>
            <person name="Mic F.A."/>
            <person name="Molotkov A."/>
            <person name="Fan X."/>
            <person name="Cuenca A.E."/>
            <person name="Duester G."/>
        </authorList>
    </citation>
    <scope>NUCLEOTIDE SEQUENCE [MRNA]</scope>
    <scope>DEVELOPMENTAL STAGE</scope>
    <scope>TISSUE SPECIFICITY</scope>
    <source>
        <strain>C57BL/6 X 129/SvJ</strain>
        <tissue>Kidney</tissue>
    </source>
</reference>
<reference key="3">
    <citation type="journal article" date="2000" name="Mech. Dev.">
        <title>Identification of RALDH-3, a novel retinaldehyde dehydrogenase, expressed in the ventral region of the retina.</title>
        <authorList>
            <person name="Suzuki R."/>
            <person name="Shintani T."/>
            <person name="Sakuta H."/>
            <person name="Kato A."/>
            <person name="Ohkawara T."/>
            <person name="Osumi N."/>
            <person name="Noda M."/>
        </authorList>
    </citation>
    <scope>NUCLEOTIDE SEQUENCE [MRNA]</scope>
    <scope>FUNCTION</scope>
    <scope>TISSUE SPECIFICITY</scope>
    <scope>CATALYTIC ACTIVITY</scope>
    <scope>PATHWAY</scope>
    <source>
        <strain>C57BL/6J</strain>
        <tissue>Retina</tissue>
    </source>
</reference>
<reference key="4">
    <citation type="journal article" date="2000" name="J. Biol. Chem.">
        <title>Aldehyde dehydrogenase 6, a cytosolic retinaldehyde dehydrogenase prominently expressed in sensory neuroepithelia during development.</title>
        <authorList>
            <person name="Grun F."/>
            <person name="Hirose Y."/>
            <person name="Kawauchi S."/>
            <person name="Ogura T."/>
            <person name="Umesono K."/>
        </authorList>
    </citation>
    <scope>NUCLEOTIDE SEQUENCE [MRNA]</scope>
    <scope>FUNCTION</scope>
    <scope>SUBCELLULAR LOCATION</scope>
    <scope>TISSUE SPECIFICITY</scope>
    <scope>CATALYTIC ACTIVITY</scope>
    <scope>PATHWAY</scope>
    <scope>BIOPHYSICOCHEMICAL PROPERTIES</scope>
</reference>
<reference key="5">
    <citation type="journal article" date="2004" name="Genome Res.">
        <title>The status, quality, and expansion of the NIH full-length cDNA project: the Mammalian Gene Collection (MGC).</title>
        <authorList>
            <consortium name="The MGC Project Team"/>
        </authorList>
    </citation>
    <scope>NUCLEOTIDE SEQUENCE [LARGE SCALE MRNA]</scope>
    <source>
        <strain>FVB/N</strain>
        <tissue>Mammary tumor</tissue>
    </source>
</reference>
<reference key="6">
    <citation type="journal article" date="2003" name="Proc. Natl. Acad. Sci. U.S.A.">
        <title>A newborn lethal defect due to inactivation of retinaldehyde dehydrogenase type 3 is prevented by maternal retinoic acid treatment.</title>
        <authorList>
            <person name="Dupe V."/>
            <person name="Matt N."/>
            <person name="Garnier J.M."/>
            <person name="Chambon P."/>
            <person name="Mark M."/>
            <person name="Ghyselinck N.B."/>
        </authorList>
    </citation>
    <scope>DISRUPTION PHENOTYPE</scope>
    <scope>FUNCTION</scope>
    <scope>TISSUE SPECIFICITY</scope>
    <scope>PATHWAY</scope>
</reference>
<reference key="7">
    <citation type="journal article" date="2005" name="J. Biol. Chem.">
        <title>Metabolism and transactivation activity of 13,14-dihydroretinoic acid.</title>
        <authorList>
            <person name="Moise A.R."/>
            <person name="Kuksa V."/>
            <person name="Blaner W.S."/>
            <person name="Baehr W."/>
            <person name="Palczewski K."/>
        </authorList>
    </citation>
    <scope>FUNCTION</scope>
    <scope>CATALYTIC ACTIVITY</scope>
</reference>
<reference key="8">
    <citation type="journal article" date="2010" name="Cell">
        <title>A tissue-specific atlas of mouse protein phosphorylation and expression.</title>
        <authorList>
            <person name="Huttlin E.L."/>
            <person name="Jedrychowski M.P."/>
            <person name="Elias J.E."/>
            <person name="Goswami T."/>
            <person name="Rad R."/>
            <person name="Beausoleil S.A."/>
            <person name="Villen J."/>
            <person name="Haas W."/>
            <person name="Sowa M.E."/>
            <person name="Gygi S.P."/>
        </authorList>
    </citation>
    <scope>IDENTIFICATION BY MASS SPECTROMETRY [LARGE SCALE ANALYSIS]</scope>
    <source>
        <tissue>Kidney</tissue>
    </source>
</reference>
<reference key="9">
    <citation type="journal article" date="2013" name="J. Neurosci.">
        <title>Retinoic acid deficiency impairs the vestibular function.</title>
        <authorList>
            <person name="Romand R."/>
            <person name="Krezel W."/>
            <person name="Beraneck M."/>
            <person name="Cammas L."/>
            <person name="Fraulob V."/>
            <person name="Messaddeq N."/>
            <person name="Kessler P."/>
            <person name="Hashino E."/>
            <person name="Dolle P."/>
        </authorList>
    </citation>
    <scope>DISRUPTION PHENOTYPE</scope>
</reference>
<evidence type="ECO:0000250" key="1"/>
<evidence type="ECO:0000250" key="2">
    <source>
        <dbReference type="UniProtKB" id="P47895"/>
    </source>
</evidence>
<evidence type="ECO:0000255" key="3">
    <source>
        <dbReference type="PROSITE-ProRule" id="PRU10007"/>
    </source>
</evidence>
<evidence type="ECO:0000255" key="4">
    <source>
        <dbReference type="PROSITE-ProRule" id="PRU10008"/>
    </source>
</evidence>
<evidence type="ECO:0000256" key="5">
    <source>
        <dbReference type="SAM" id="MobiDB-lite"/>
    </source>
</evidence>
<evidence type="ECO:0000269" key="6">
    <source>
    </source>
</evidence>
<evidence type="ECO:0000269" key="7">
    <source>
    </source>
</evidence>
<evidence type="ECO:0000269" key="8">
    <source>
    </source>
</evidence>
<evidence type="ECO:0000269" key="9">
    <source>
    </source>
</evidence>
<evidence type="ECO:0000269" key="10">
    <source>
    </source>
</evidence>
<evidence type="ECO:0000269" key="11">
    <source>
    </source>
</evidence>
<evidence type="ECO:0000269" key="12">
    <source>
    </source>
</evidence>
<evidence type="ECO:0000303" key="13">
    <source>
    </source>
</evidence>
<evidence type="ECO:0000303" key="14">
    <source>
    </source>
</evidence>
<evidence type="ECO:0000303" key="15">
    <source>
    </source>
</evidence>
<evidence type="ECO:0000303" key="16">
    <source>
    </source>
</evidence>
<evidence type="ECO:0000305" key="17"/>
<comment type="function">
    <text evidence="2 7 9 10 11">Catalyzes the NAD-dependent oxidation of aldehyde substrates, such as all-trans-retinal and all-trans-13,14-dihydroretinal, to their corresponding carboxylic acids, all-trans-retinoate and all-trans-13,14-dihydroretinoate, respectively (PubMed:11013254, PubMed:11044606, PubMed:14623956, PubMed:15911617). High specificity for all-trans-retinal as substrate, can also accept acetaldehyde as substrate in vitro but with lower affinity (By similarity). Required for the biosynthesis of normal levels of retinoate in the embryonic ocular and nasal regions; a critical lipid in the embryonic development of the eye and the nasal region (PubMed:14623956).</text>
</comment>
<comment type="catalytic activity">
    <reaction evidence="11">
        <text>retinal + NAD(+) + H2O = retinoate + NADH + 2 H(+)</text>
        <dbReference type="Rhea" id="RHEA:16177"/>
        <dbReference type="ChEBI" id="CHEBI:15035"/>
        <dbReference type="ChEBI" id="CHEBI:15036"/>
        <dbReference type="ChEBI" id="CHEBI:15377"/>
        <dbReference type="ChEBI" id="CHEBI:15378"/>
        <dbReference type="ChEBI" id="CHEBI:57540"/>
        <dbReference type="ChEBI" id="CHEBI:57945"/>
        <dbReference type="EC" id="1.2.1.36"/>
    </reaction>
    <physiologicalReaction direction="left-to-right" evidence="11">
        <dbReference type="Rhea" id="RHEA:16178"/>
    </physiologicalReaction>
</comment>
<comment type="catalytic activity">
    <reaction evidence="7 9 11">
        <text>all-trans-retinal + NAD(+) + H2O = all-trans-retinoate + NADH + 2 H(+)</text>
        <dbReference type="Rhea" id="RHEA:42080"/>
        <dbReference type="ChEBI" id="CHEBI:15377"/>
        <dbReference type="ChEBI" id="CHEBI:15378"/>
        <dbReference type="ChEBI" id="CHEBI:17898"/>
        <dbReference type="ChEBI" id="CHEBI:35291"/>
        <dbReference type="ChEBI" id="CHEBI:57540"/>
        <dbReference type="ChEBI" id="CHEBI:57945"/>
        <dbReference type="EC" id="1.2.1.36"/>
    </reaction>
    <physiologicalReaction direction="left-to-right" evidence="7 9 11">
        <dbReference type="Rhea" id="RHEA:42081"/>
    </physiologicalReaction>
</comment>
<comment type="catalytic activity">
    <reaction evidence="11">
        <text>all-trans-13,14-dihydroretinal + NAD(+) + H2O = all-trans-13,14-dihydroretinoate + NADH + 2 H(+)</text>
        <dbReference type="Rhea" id="RHEA:75119"/>
        <dbReference type="ChEBI" id="CHEBI:15377"/>
        <dbReference type="ChEBI" id="CHEBI:15378"/>
        <dbReference type="ChEBI" id="CHEBI:57540"/>
        <dbReference type="ChEBI" id="CHEBI:57945"/>
        <dbReference type="ChEBI" id="CHEBI:194182"/>
        <dbReference type="ChEBI" id="CHEBI:194183"/>
    </reaction>
    <physiologicalReaction direction="left-to-right" evidence="11">
        <dbReference type="Rhea" id="RHEA:75120"/>
    </physiologicalReaction>
</comment>
<comment type="biophysicochemical properties">
    <kinetics>
        <KM evidence="7">0.33 uM for all-trans retinal</KM>
        <Vmax evidence="7">58.0 nmol/min/mg enzyme for all-trans retinal</Vmax>
    </kinetics>
</comment>
<comment type="pathway">
    <text evidence="7 9 10 11">Cofactor metabolism; retinol metabolism.</text>
</comment>
<comment type="subunit">
    <text evidence="2">Homotetramer.</text>
</comment>
<comment type="subcellular location">
    <subcellularLocation>
        <location evidence="7">Cytoplasm</location>
    </subcellularLocation>
</comment>
<comment type="tissue specificity">
    <text evidence="6 7 8 9 10">Detected in embryonic head (at protein level) (PubMed:14623956). Ventral retina.</text>
</comment>
<comment type="developmental stage">
    <text evidence="8">In mouse embryos, RALDH3 expression is first noticed in the ventral optic eminence at 8.75 dpc, then in the optic vesicle/cup, otic vesicle and olfactory placode/pit from 9.5 dpc to 11.5 dpc.</text>
</comment>
<comment type="disruption phenotype">
    <text evidence="10 12">Mutant mice are born at the expected Mendelian rate, but all die within 10 hours after birth (PubMed:14623956, PubMed:23536097). Lethality is due to respiratory distress, caused by choanal atresia, i.e. the lack of communication between the nasal and oral cavities. Mutant embryos at 11.5 dpc lack detectable retinoic acid in the ventral retina, nasal epithelium and in the nasolacrimal groove. At 14.5 dpc mutant embryos display shortening of the ventral retina associated with lens rotation and persistence of the retrolenticular membrane, indicative of retinoic acid deficiency. Still, at 18.5 dpc the ventral retina appears normal. Embryos at 18.5 dpc lack Harderian glands, and display multiple malformations in the nasal region, including choanal atresia, lack of maxillary sinuses and nasolacrimal ducts (PubMed:14623956). Oral gavage of pregnant females with retinoic acid prevents choanal atresia and other malformations of the nasal region (PubMed:14623956, PubMed:23536097). Females that were fed retinoic acid give birth to pups with malformations of the inner ear vestibular organ, causing repetitive circling behavior with head tilting (PubMed:23536097). Likewise, mice display impaired ability in crossing a beam without slipping and an impaired ability to swim (PubMed:23536097).</text>
</comment>
<comment type="similarity">
    <text evidence="17">Belongs to the aldehyde dehydrogenase family.</text>
</comment>
<protein>
    <recommendedName>
        <fullName>Retinaldehyde dehydrogenase 3</fullName>
        <shortName evidence="15">RALDH-3</shortName>
        <shortName evidence="14 16">RalDH3</shortName>
        <ecNumber evidence="7 9 11">1.2.1.36</ecNumber>
    </recommendedName>
    <alternativeName>
        <fullName evidence="13">Aldehyde dehydrogenase 6</fullName>
    </alternativeName>
    <alternativeName>
        <fullName>Aldehyde dehydrogenase family 1 member A3</fullName>
        <shortName>Aldh1a3</shortName>
    </alternativeName>
</protein>
<feature type="initiator methionine" description="Removed" evidence="2">
    <location>
        <position position="1"/>
    </location>
</feature>
<feature type="chain" id="PRO_0000056479" description="Retinaldehyde dehydrogenase 3">
    <location>
        <begin position="2"/>
        <end position="512"/>
    </location>
</feature>
<feature type="region of interest" description="Disordered" evidence="5">
    <location>
        <begin position="1"/>
        <end position="22"/>
    </location>
</feature>
<feature type="active site" description="Proton acceptor" evidence="3 4">
    <location>
        <position position="280"/>
    </location>
</feature>
<feature type="active site" description="Nucleophile" evidence="3 4">
    <location>
        <position position="314"/>
    </location>
</feature>
<feature type="binding site" evidence="2">
    <location>
        <position position="204"/>
    </location>
    <ligand>
        <name>NAD(+)</name>
        <dbReference type="ChEBI" id="CHEBI:57540"/>
    </ligand>
</feature>
<feature type="binding site" evidence="2">
    <location>
        <position position="207"/>
    </location>
    <ligand>
        <name>NAD(+)</name>
        <dbReference type="ChEBI" id="CHEBI:57540"/>
    </ligand>
</feature>
<feature type="binding site" evidence="2">
    <location>
        <begin position="257"/>
        <end position="262"/>
    </location>
    <ligand>
        <name>NAD(+)</name>
        <dbReference type="ChEBI" id="CHEBI:57540"/>
    </ligand>
</feature>
<feature type="binding site" evidence="2">
    <location>
        <position position="361"/>
    </location>
    <ligand>
        <name>NAD(+)</name>
        <dbReference type="ChEBI" id="CHEBI:57540"/>
    </ligand>
</feature>
<feature type="binding site" evidence="2">
    <location>
        <position position="411"/>
    </location>
    <ligand>
        <name>NAD(+)</name>
        <dbReference type="ChEBI" id="CHEBI:57540"/>
    </ligand>
</feature>
<feature type="site" description="Transition state stabilizer" evidence="1">
    <location>
        <position position="181"/>
    </location>
</feature>
<feature type="modified residue" description="N-acetylalanine" evidence="2">
    <location>
        <position position="2"/>
    </location>
</feature>
<feature type="sequence conflict" description="In Ref. 1; AAF67736." evidence="17" ref="1">
    <original>L</original>
    <variation>V</variation>
    <location>
        <position position="91"/>
    </location>
</feature>
<feature type="sequence conflict" description="In Ref. 4; AAG33935." evidence="17" ref="4">
    <original>Q</original>
    <variation>R</variation>
    <location>
        <position position="208"/>
    </location>
</feature>
<feature type="sequence conflict" description="In Ref. 1; AAF67736." evidence="17" ref="1">
    <original>V</original>
    <variation>E</variation>
    <location>
        <position position="223"/>
    </location>
</feature>
<feature type="sequence conflict" description="In Ref. 4; AAG33935." evidence="17" ref="4">
    <original>R</original>
    <variation>S</variation>
    <location>
        <position position="341"/>
    </location>
</feature>
<feature type="sequence conflict" description="In Ref. 1; AAF67736." evidence="17" ref="1">
    <original>I</original>
    <variation>R</variation>
    <location>
        <position position="407"/>
    </location>
</feature>
<organism>
    <name type="scientific">Mus musculus</name>
    <name type="common">Mouse</name>
    <dbReference type="NCBI Taxonomy" id="10090"/>
    <lineage>
        <taxon>Eukaryota</taxon>
        <taxon>Metazoa</taxon>
        <taxon>Chordata</taxon>
        <taxon>Craniata</taxon>
        <taxon>Vertebrata</taxon>
        <taxon>Euteleostomi</taxon>
        <taxon>Mammalia</taxon>
        <taxon>Eutheria</taxon>
        <taxon>Euarchontoglires</taxon>
        <taxon>Glires</taxon>
        <taxon>Rodentia</taxon>
        <taxon>Myomorpha</taxon>
        <taxon>Muroidea</taxon>
        <taxon>Muridae</taxon>
        <taxon>Murinae</taxon>
        <taxon>Mus</taxon>
        <taxon>Mus</taxon>
    </lineage>
</organism>
<name>AL1A3_MOUSE</name>
<accession>Q9JHW9</accession>
<accession>Q9EQP7</accession>
<accession>Q9JI72</accession>
<proteinExistence type="evidence at protein level"/>
<dbReference type="EC" id="1.2.1.36" evidence="7 9 11"/>
<dbReference type="EMBL" id="AF253409">
    <property type="protein sequence ID" value="AAF67736.1"/>
    <property type="molecule type" value="mRNA"/>
</dbReference>
<dbReference type="EMBL" id="AF280404">
    <property type="protein sequence ID" value="AAF86980.1"/>
    <property type="molecule type" value="mRNA"/>
</dbReference>
<dbReference type="EMBL" id="AF246711">
    <property type="protein sequence ID" value="AAG38488.1"/>
    <property type="molecule type" value="mRNA"/>
</dbReference>
<dbReference type="EMBL" id="AF152359">
    <property type="protein sequence ID" value="AAG33935.1"/>
    <property type="molecule type" value="mRNA"/>
</dbReference>
<dbReference type="EMBL" id="BC058277">
    <property type="protein sequence ID" value="AAH58277.1"/>
    <property type="molecule type" value="mRNA"/>
</dbReference>
<dbReference type="CCDS" id="CCDS21345.1"/>
<dbReference type="RefSeq" id="NP_444310.3">
    <property type="nucleotide sequence ID" value="NM_053080.3"/>
</dbReference>
<dbReference type="SMR" id="Q9JHW9"/>
<dbReference type="BioGRID" id="208193">
    <property type="interactions" value="1"/>
</dbReference>
<dbReference type="FunCoup" id="Q9JHW9">
    <property type="interactions" value="523"/>
</dbReference>
<dbReference type="STRING" id="10090.ENSMUSP00000015278"/>
<dbReference type="GlyGen" id="Q9JHW9">
    <property type="glycosylation" value="1 site"/>
</dbReference>
<dbReference type="iPTMnet" id="Q9JHW9"/>
<dbReference type="PhosphoSitePlus" id="Q9JHW9"/>
<dbReference type="jPOST" id="Q9JHW9"/>
<dbReference type="PaxDb" id="10090-ENSMUSP00000015278"/>
<dbReference type="ProteomicsDB" id="285806"/>
<dbReference type="Antibodypedia" id="43944">
    <property type="antibodies" value="236 antibodies from 31 providers"/>
</dbReference>
<dbReference type="DNASU" id="56847"/>
<dbReference type="Ensembl" id="ENSMUST00000015278.15">
    <property type="protein sequence ID" value="ENSMUSP00000015278.8"/>
    <property type="gene ID" value="ENSMUSG00000015134.16"/>
</dbReference>
<dbReference type="GeneID" id="56847"/>
<dbReference type="KEGG" id="mmu:56847"/>
<dbReference type="UCSC" id="uc009hhi.2">
    <property type="organism name" value="mouse"/>
</dbReference>
<dbReference type="AGR" id="MGI:1861722"/>
<dbReference type="CTD" id="220"/>
<dbReference type="MGI" id="MGI:1861722">
    <property type="gene designation" value="Aldh1a3"/>
</dbReference>
<dbReference type="VEuPathDB" id="HostDB:ENSMUSG00000015134"/>
<dbReference type="eggNOG" id="KOG2450">
    <property type="taxonomic scope" value="Eukaryota"/>
</dbReference>
<dbReference type="GeneTree" id="ENSGT00940000158815"/>
<dbReference type="HOGENOM" id="CLU_005391_0_1_1"/>
<dbReference type="InParanoid" id="Q9JHW9"/>
<dbReference type="OMA" id="GTYAINW"/>
<dbReference type="OrthoDB" id="310895at2759"/>
<dbReference type="PhylomeDB" id="Q9JHW9"/>
<dbReference type="TreeFam" id="TF300455"/>
<dbReference type="BRENDA" id="1.2.1.36">
    <property type="organism ID" value="3474"/>
</dbReference>
<dbReference type="BRENDA" id="1.2.1.5">
    <property type="organism ID" value="3474"/>
</dbReference>
<dbReference type="Reactome" id="R-MMU-5365859">
    <property type="pathway name" value="RA biosynthesis pathway"/>
</dbReference>
<dbReference type="SABIO-RK" id="Q9JHW9"/>
<dbReference type="UniPathway" id="UPA00912"/>
<dbReference type="BioGRID-ORCS" id="56847">
    <property type="hits" value="2 hits in 81 CRISPR screens"/>
</dbReference>
<dbReference type="ChiTaRS" id="Aldh1a3">
    <property type="organism name" value="mouse"/>
</dbReference>
<dbReference type="PRO" id="PR:Q9JHW9"/>
<dbReference type="Proteomes" id="UP000000589">
    <property type="component" value="Chromosome 7"/>
</dbReference>
<dbReference type="RNAct" id="Q9JHW9">
    <property type="molecule type" value="protein"/>
</dbReference>
<dbReference type="Bgee" id="ENSMUSG00000015134">
    <property type="expression patterns" value="Expressed in optic fissure and 223 other cell types or tissues"/>
</dbReference>
<dbReference type="ExpressionAtlas" id="Q9JHW9">
    <property type="expression patterns" value="baseline and differential"/>
</dbReference>
<dbReference type="GO" id="GO:0005737">
    <property type="term" value="C:cytoplasm"/>
    <property type="evidence" value="ECO:0000314"/>
    <property type="project" value="MGI"/>
</dbReference>
<dbReference type="GO" id="GO:0004028">
    <property type="term" value="F:3-chloroallyl aldehyde dehydrogenase activity"/>
    <property type="evidence" value="ECO:0000304"/>
    <property type="project" value="MGI"/>
</dbReference>
<dbReference type="GO" id="GO:0004029">
    <property type="term" value="F:aldehyde dehydrogenase (NAD+) activity"/>
    <property type="evidence" value="ECO:0000314"/>
    <property type="project" value="MGI"/>
</dbReference>
<dbReference type="GO" id="GO:0004030">
    <property type="term" value="F:aldehyde dehydrogenase [NAD(P)+] activity"/>
    <property type="evidence" value="ECO:0000314"/>
    <property type="project" value="MGI"/>
</dbReference>
<dbReference type="GO" id="GO:0070403">
    <property type="term" value="F:NAD+ binding"/>
    <property type="evidence" value="ECO:0000314"/>
    <property type="project" value="MGI"/>
</dbReference>
<dbReference type="GO" id="GO:0042803">
    <property type="term" value="F:protein homodimerization activity"/>
    <property type="evidence" value="ECO:0007669"/>
    <property type="project" value="Ensembl"/>
</dbReference>
<dbReference type="GO" id="GO:0001758">
    <property type="term" value="F:retinal dehydrogenase activity"/>
    <property type="evidence" value="ECO:0000250"/>
    <property type="project" value="UniProtKB"/>
</dbReference>
<dbReference type="GO" id="GO:0070324">
    <property type="term" value="F:thyroid hormone binding"/>
    <property type="evidence" value="ECO:0000353"/>
    <property type="project" value="MGI"/>
</dbReference>
<dbReference type="GO" id="GO:0006915">
    <property type="term" value="P:apoptotic process"/>
    <property type="evidence" value="ECO:0000315"/>
    <property type="project" value="MGI"/>
</dbReference>
<dbReference type="GO" id="GO:0031076">
    <property type="term" value="P:embryonic camera-type eye development"/>
    <property type="evidence" value="ECO:0000315"/>
    <property type="project" value="UniProtKB"/>
</dbReference>
<dbReference type="GO" id="GO:0048048">
    <property type="term" value="P:embryonic eye morphogenesis"/>
    <property type="evidence" value="ECO:0000315"/>
    <property type="project" value="MGI"/>
</dbReference>
<dbReference type="GO" id="GO:0060324">
    <property type="term" value="P:face development"/>
    <property type="evidence" value="ECO:0000316"/>
    <property type="project" value="MGI"/>
</dbReference>
<dbReference type="GO" id="GO:0070384">
    <property type="term" value="P:Harderian gland development"/>
    <property type="evidence" value="ECO:0000315"/>
    <property type="project" value="UniProtKB"/>
</dbReference>
<dbReference type="GO" id="GO:0042472">
    <property type="term" value="P:inner ear morphogenesis"/>
    <property type="evidence" value="ECO:0000315"/>
    <property type="project" value="MGI"/>
</dbReference>
<dbReference type="GO" id="GO:0007626">
    <property type="term" value="P:locomotory behavior"/>
    <property type="evidence" value="ECO:0000315"/>
    <property type="project" value="MGI"/>
</dbReference>
<dbReference type="GO" id="GO:0050885">
    <property type="term" value="P:neuromuscular process controlling balance"/>
    <property type="evidence" value="ECO:0000315"/>
    <property type="project" value="MGI"/>
</dbReference>
<dbReference type="GO" id="GO:0043584">
    <property type="term" value="P:nose development"/>
    <property type="evidence" value="ECO:0000315"/>
    <property type="project" value="UniProtKB"/>
</dbReference>
<dbReference type="GO" id="GO:0021768">
    <property type="term" value="P:nucleus accumbens development"/>
    <property type="evidence" value="ECO:0000315"/>
    <property type="project" value="MGI"/>
</dbReference>
<dbReference type="GO" id="GO:0060166">
    <property type="term" value="P:olfactory pit development"/>
    <property type="evidence" value="ECO:0000315"/>
    <property type="project" value="MGI"/>
</dbReference>
<dbReference type="GO" id="GO:0002072">
    <property type="term" value="P:optic cup morphogenesis involved in camera-type eye development"/>
    <property type="evidence" value="ECO:0000316"/>
    <property type="project" value="MGI"/>
</dbReference>
<dbReference type="GO" id="GO:0043065">
    <property type="term" value="P:positive regulation of apoptotic process"/>
    <property type="evidence" value="ECO:0000315"/>
    <property type="project" value="MGI"/>
</dbReference>
<dbReference type="GO" id="GO:0048386">
    <property type="term" value="P:positive regulation of retinoic acid receptor signaling pathway"/>
    <property type="evidence" value="ECO:0000266"/>
    <property type="project" value="MGI"/>
</dbReference>
<dbReference type="GO" id="GO:0051289">
    <property type="term" value="P:protein homotetramerization"/>
    <property type="evidence" value="ECO:0000250"/>
    <property type="project" value="UniProtKB"/>
</dbReference>
<dbReference type="GO" id="GO:0042574">
    <property type="term" value="P:retinal metabolic process"/>
    <property type="evidence" value="ECO:0007669"/>
    <property type="project" value="Ensembl"/>
</dbReference>
<dbReference type="GO" id="GO:0002138">
    <property type="term" value="P:retinoic acid biosynthetic process"/>
    <property type="evidence" value="ECO:0000314"/>
    <property type="project" value="MGI"/>
</dbReference>
<dbReference type="GO" id="GO:0042573">
    <property type="term" value="P:retinoic acid metabolic process"/>
    <property type="evidence" value="ECO:0000315"/>
    <property type="project" value="MGI"/>
</dbReference>
<dbReference type="GO" id="GO:0042572">
    <property type="term" value="P:retinol metabolic process"/>
    <property type="evidence" value="ECO:0007669"/>
    <property type="project" value="UniProtKB-UniPathway"/>
</dbReference>
<dbReference type="GO" id="GO:0060013">
    <property type="term" value="P:righting reflex"/>
    <property type="evidence" value="ECO:0000315"/>
    <property type="project" value="MGI"/>
</dbReference>
<dbReference type="CDD" id="cd07141">
    <property type="entry name" value="ALDH_F1AB_F2_RALDH1"/>
    <property type="match status" value="1"/>
</dbReference>
<dbReference type="FunFam" id="3.40.605.10:FF:000054">
    <property type="entry name" value="Aldehyde dehydrogenase family 1 member A3"/>
    <property type="match status" value="1"/>
</dbReference>
<dbReference type="FunFam" id="3.40.605.10:FF:000026">
    <property type="entry name" value="Aldehyde dehydrogenase, putative"/>
    <property type="match status" value="1"/>
</dbReference>
<dbReference type="FunFam" id="3.40.309.10:FF:000001">
    <property type="entry name" value="Mitochondrial aldehyde dehydrogenase 2"/>
    <property type="match status" value="1"/>
</dbReference>
<dbReference type="Gene3D" id="3.40.605.10">
    <property type="entry name" value="Aldehyde Dehydrogenase, Chain A, domain 1"/>
    <property type="match status" value="1"/>
</dbReference>
<dbReference type="Gene3D" id="3.40.309.10">
    <property type="entry name" value="Aldehyde Dehydrogenase, Chain A, domain 2"/>
    <property type="match status" value="1"/>
</dbReference>
<dbReference type="InterPro" id="IPR016161">
    <property type="entry name" value="Ald_DH/histidinol_DH"/>
</dbReference>
<dbReference type="InterPro" id="IPR016163">
    <property type="entry name" value="Ald_DH_C"/>
</dbReference>
<dbReference type="InterPro" id="IPR016160">
    <property type="entry name" value="Ald_DH_CS_CYS"/>
</dbReference>
<dbReference type="InterPro" id="IPR029510">
    <property type="entry name" value="Ald_DH_CS_GLU"/>
</dbReference>
<dbReference type="InterPro" id="IPR016162">
    <property type="entry name" value="Ald_DH_N"/>
</dbReference>
<dbReference type="InterPro" id="IPR015590">
    <property type="entry name" value="Aldehyde_DH_dom"/>
</dbReference>
<dbReference type="InterPro" id="IPR012394">
    <property type="entry name" value="Aldehyde_DH_NAD(P)"/>
</dbReference>
<dbReference type="PANTHER" id="PTHR11699">
    <property type="entry name" value="ALDEHYDE DEHYDROGENASE-RELATED"/>
    <property type="match status" value="1"/>
</dbReference>
<dbReference type="Pfam" id="PF00171">
    <property type="entry name" value="Aldedh"/>
    <property type="match status" value="1"/>
</dbReference>
<dbReference type="PIRSF" id="PIRSF036492">
    <property type="entry name" value="ALDH"/>
    <property type="match status" value="1"/>
</dbReference>
<dbReference type="SUPFAM" id="SSF53720">
    <property type="entry name" value="ALDH-like"/>
    <property type="match status" value="1"/>
</dbReference>
<dbReference type="PROSITE" id="PS00070">
    <property type="entry name" value="ALDEHYDE_DEHYDR_CYS"/>
    <property type="match status" value="1"/>
</dbReference>
<dbReference type="PROSITE" id="PS00687">
    <property type="entry name" value="ALDEHYDE_DEHYDR_GLU"/>
    <property type="match status" value="1"/>
</dbReference>
<gene>
    <name type="primary">Aldh1a3</name>
    <name type="synonym">Aldh6</name>
    <name type="synonym">Raldh3</name>
</gene>
<keyword id="KW-0007">Acetylation</keyword>
<keyword id="KW-0963">Cytoplasm</keyword>
<keyword id="KW-0443">Lipid metabolism</keyword>
<keyword id="KW-0520">NAD</keyword>
<keyword id="KW-0560">Oxidoreductase</keyword>
<keyword id="KW-1185">Reference proteome</keyword>